<gene>
    <name type="primary">CDH4</name>
</gene>
<keyword id="KW-0025">Alternative splicing</keyword>
<keyword id="KW-0106">Calcium</keyword>
<keyword id="KW-0130">Cell adhesion</keyword>
<keyword id="KW-1003">Cell membrane</keyword>
<keyword id="KW-0165">Cleavage on pair of basic residues</keyword>
<keyword id="KW-0325">Glycoprotein</keyword>
<keyword id="KW-0472">Membrane</keyword>
<keyword id="KW-0479">Metal-binding</keyword>
<keyword id="KW-1267">Proteomics identification</keyword>
<keyword id="KW-1185">Reference proteome</keyword>
<keyword id="KW-0677">Repeat</keyword>
<keyword id="KW-0732">Signal</keyword>
<keyword id="KW-0812">Transmembrane</keyword>
<keyword id="KW-1133">Transmembrane helix</keyword>
<organism>
    <name type="scientific">Homo sapiens</name>
    <name type="common">Human</name>
    <dbReference type="NCBI Taxonomy" id="9606"/>
    <lineage>
        <taxon>Eukaryota</taxon>
        <taxon>Metazoa</taxon>
        <taxon>Chordata</taxon>
        <taxon>Craniata</taxon>
        <taxon>Vertebrata</taxon>
        <taxon>Euteleostomi</taxon>
        <taxon>Mammalia</taxon>
        <taxon>Eutheria</taxon>
        <taxon>Euarchontoglires</taxon>
        <taxon>Primates</taxon>
        <taxon>Haplorrhini</taxon>
        <taxon>Catarrhini</taxon>
        <taxon>Hominidae</taxon>
        <taxon>Homo</taxon>
    </lineage>
</organism>
<evidence type="ECO:0000250" key="1"/>
<evidence type="ECO:0000255" key="2"/>
<evidence type="ECO:0000255" key="3">
    <source>
        <dbReference type="PROSITE-ProRule" id="PRU00043"/>
    </source>
</evidence>
<evidence type="ECO:0000256" key="4">
    <source>
        <dbReference type="SAM" id="MobiDB-lite"/>
    </source>
</evidence>
<evidence type="ECO:0000269" key="5">
    <source>
    </source>
</evidence>
<evidence type="ECO:0000269" key="6">
    <source>
    </source>
</evidence>
<evidence type="ECO:0000303" key="7">
    <source>
    </source>
</evidence>
<evidence type="ECO:0000305" key="8"/>
<name>CADH4_HUMAN</name>
<sequence>MTAGAGVLLLLLSLSGALRAHNEDLTTRETCKAGFSEDDYTALISQNILEGEKLLQVKFSSCVGTKGTQYETNSMDFKVGADGTVFATRELQVPSEQVAFTVTAWDSQTAEKWDAVVRLLVAQTSSPHSGHKPQKGKKVVALDPSPPPKDTLLPWPQHQNANGLRRRKRDWVIPPINVPENSRGPFPQQLVRIRSDKDNDIPIRYSITGVGADQPPMEVFSIDSMSGRMYVTRPMDREEHASYHLRAHAVDMNGNKVENPIDLYIYVIDMNDNRPEFINQVYNGSVDEGSKPGTYVMTVTANDADDSTTANGMVRYRIVTQTPQSPSQNMFTINSETGDIVTVAAGLDREKVQQYTVIVQATDMEGNLNYGLSNTATAIITVTDVNDNPPEFTASTFAGEVPENRVETVVANLTVMDRDQPHSPNWNAVYRIISGDPSGHFSVRTDPVTNEGMVTVVKAVDYELNRAFMLTVMVSNQAPLASGIQMSFQSTAGVTISIMDINEAPYFPSNHKLIRLEEGVPPGTVLTTFSAVDPDRFMQQAVRYSKLSDPASWLHINATNGQITTAAVLDRESLYTKNNVYEATFLAADNGIPPASGTGTLQIYLIDINDNAPELLPKEAQICEKPNLNAINITAADADVDPNIGPYVFELPFVPAAVRKNWTITRLNGDYAQLSLRILYLEAGMYDVPIIVTDSGNPPLSNTSIIKVKVCPCDDNGDCTTIGAVAAAGLGTGAIVAILICILILLTMVLLFVMWMKRREKERHTKQLLIDPEDDVRDNILKYDEEGGGEEDQDYDLSQLQQPEAMGHVPSKAPGVRRVDERPVGAEPQYPIRPMVPHPGDIGDFINEGLRAADNDPTAPPYDSLLVFDYEGSGSTAGSVSSLNSSSSGDQDYDYLNDWGPRFKKLADMYGGGEED</sequence>
<accession>P55283</accession>
<accession>B3KWB8</accession>
<accession>G3V1P8</accession>
<accession>Q2M208</accession>
<accession>Q5VZ44</accession>
<accession>Q9BZ05</accession>
<reference key="1">
    <citation type="journal article" date="1994" name="Cell Adhes. Commun.">
        <title>Cloning of five human cadherins clarifies characteristic features of cadherin extracellular domain and provides further evidence for two structurally different types of cadherin.</title>
        <authorList>
            <person name="Tanihara H."/>
            <person name="Sano K."/>
            <person name="Heimark R.L."/>
            <person name="St John T."/>
            <person name="Suzuki S."/>
        </authorList>
    </citation>
    <scope>NUCLEOTIDE SEQUENCE [MRNA] (ISOFORM 1)</scope>
    <scope>VARIANT ARG-625</scope>
    <source>
        <tissue>Brain</tissue>
    </source>
</reference>
<reference key="2">
    <citation type="journal article" date="2004" name="Nat. Genet.">
        <title>Complete sequencing and characterization of 21,243 full-length human cDNAs.</title>
        <authorList>
            <person name="Ota T."/>
            <person name="Suzuki Y."/>
            <person name="Nishikawa T."/>
            <person name="Otsuki T."/>
            <person name="Sugiyama T."/>
            <person name="Irie R."/>
            <person name="Wakamatsu A."/>
            <person name="Hayashi K."/>
            <person name="Sato H."/>
            <person name="Nagai K."/>
            <person name="Kimura K."/>
            <person name="Makita H."/>
            <person name="Sekine M."/>
            <person name="Obayashi M."/>
            <person name="Nishi T."/>
            <person name="Shibahara T."/>
            <person name="Tanaka T."/>
            <person name="Ishii S."/>
            <person name="Yamamoto J."/>
            <person name="Saito K."/>
            <person name="Kawai Y."/>
            <person name="Isono Y."/>
            <person name="Nakamura Y."/>
            <person name="Nagahari K."/>
            <person name="Murakami K."/>
            <person name="Yasuda T."/>
            <person name="Iwayanagi T."/>
            <person name="Wagatsuma M."/>
            <person name="Shiratori A."/>
            <person name="Sudo H."/>
            <person name="Hosoiri T."/>
            <person name="Kaku Y."/>
            <person name="Kodaira H."/>
            <person name="Kondo H."/>
            <person name="Sugawara M."/>
            <person name="Takahashi M."/>
            <person name="Kanda K."/>
            <person name="Yokoi T."/>
            <person name="Furuya T."/>
            <person name="Kikkawa E."/>
            <person name="Omura Y."/>
            <person name="Abe K."/>
            <person name="Kamihara K."/>
            <person name="Katsuta N."/>
            <person name="Sato K."/>
            <person name="Tanikawa M."/>
            <person name="Yamazaki M."/>
            <person name="Ninomiya K."/>
            <person name="Ishibashi T."/>
            <person name="Yamashita H."/>
            <person name="Murakawa K."/>
            <person name="Fujimori K."/>
            <person name="Tanai H."/>
            <person name="Kimata M."/>
            <person name="Watanabe M."/>
            <person name="Hiraoka S."/>
            <person name="Chiba Y."/>
            <person name="Ishida S."/>
            <person name="Ono Y."/>
            <person name="Takiguchi S."/>
            <person name="Watanabe S."/>
            <person name="Yosida M."/>
            <person name="Hotuta T."/>
            <person name="Kusano J."/>
            <person name="Kanehori K."/>
            <person name="Takahashi-Fujii A."/>
            <person name="Hara H."/>
            <person name="Tanase T.-O."/>
            <person name="Nomura Y."/>
            <person name="Togiya S."/>
            <person name="Komai F."/>
            <person name="Hara R."/>
            <person name="Takeuchi K."/>
            <person name="Arita M."/>
            <person name="Imose N."/>
            <person name="Musashino K."/>
            <person name="Yuuki H."/>
            <person name="Oshima A."/>
            <person name="Sasaki N."/>
            <person name="Aotsuka S."/>
            <person name="Yoshikawa Y."/>
            <person name="Matsunawa H."/>
            <person name="Ichihara T."/>
            <person name="Shiohata N."/>
            <person name="Sano S."/>
            <person name="Moriya S."/>
            <person name="Momiyama H."/>
            <person name="Satoh N."/>
            <person name="Takami S."/>
            <person name="Terashima Y."/>
            <person name="Suzuki O."/>
            <person name="Nakagawa S."/>
            <person name="Senoh A."/>
            <person name="Mizoguchi H."/>
            <person name="Goto Y."/>
            <person name="Shimizu F."/>
            <person name="Wakebe H."/>
            <person name="Hishigaki H."/>
            <person name="Watanabe T."/>
            <person name="Sugiyama A."/>
            <person name="Takemoto M."/>
            <person name="Kawakami B."/>
            <person name="Yamazaki M."/>
            <person name="Watanabe K."/>
            <person name="Kumagai A."/>
            <person name="Itakura S."/>
            <person name="Fukuzumi Y."/>
            <person name="Fujimori Y."/>
            <person name="Komiyama M."/>
            <person name="Tashiro H."/>
            <person name="Tanigami A."/>
            <person name="Fujiwara T."/>
            <person name="Ono T."/>
            <person name="Yamada K."/>
            <person name="Fujii Y."/>
            <person name="Ozaki K."/>
            <person name="Hirao M."/>
            <person name="Ohmori Y."/>
            <person name="Kawabata A."/>
            <person name="Hikiji T."/>
            <person name="Kobatake N."/>
            <person name="Inagaki H."/>
            <person name="Ikema Y."/>
            <person name="Okamoto S."/>
            <person name="Okitani R."/>
            <person name="Kawakami T."/>
            <person name="Noguchi S."/>
            <person name="Itoh T."/>
            <person name="Shigeta K."/>
            <person name="Senba T."/>
            <person name="Matsumura K."/>
            <person name="Nakajima Y."/>
            <person name="Mizuno T."/>
            <person name="Morinaga M."/>
            <person name="Sasaki M."/>
            <person name="Togashi T."/>
            <person name="Oyama M."/>
            <person name="Hata H."/>
            <person name="Watanabe M."/>
            <person name="Komatsu T."/>
            <person name="Mizushima-Sugano J."/>
            <person name="Satoh T."/>
            <person name="Shirai Y."/>
            <person name="Takahashi Y."/>
            <person name="Nakagawa K."/>
            <person name="Okumura K."/>
            <person name="Nagase T."/>
            <person name="Nomura N."/>
            <person name="Kikuchi H."/>
            <person name="Masuho Y."/>
            <person name="Yamashita R."/>
            <person name="Nakai K."/>
            <person name="Yada T."/>
            <person name="Nakamura Y."/>
            <person name="Ohara O."/>
            <person name="Isogai T."/>
            <person name="Sugano S."/>
        </authorList>
    </citation>
    <scope>NUCLEOTIDE SEQUENCE [LARGE SCALE MRNA] (ISOFORM 2)</scope>
    <source>
        <tissue>Brain</tissue>
    </source>
</reference>
<reference key="3">
    <citation type="journal article" date="2001" name="Nature">
        <title>The DNA sequence and comparative analysis of human chromosome 20.</title>
        <authorList>
            <person name="Deloukas P."/>
            <person name="Matthews L.H."/>
            <person name="Ashurst J.L."/>
            <person name="Burton J."/>
            <person name="Gilbert J.G.R."/>
            <person name="Jones M."/>
            <person name="Stavrides G."/>
            <person name="Almeida J.P."/>
            <person name="Babbage A.K."/>
            <person name="Bagguley C.L."/>
            <person name="Bailey J."/>
            <person name="Barlow K.F."/>
            <person name="Bates K.N."/>
            <person name="Beard L.M."/>
            <person name="Beare D.M."/>
            <person name="Beasley O.P."/>
            <person name="Bird C.P."/>
            <person name="Blakey S.E."/>
            <person name="Bridgeman A.M."/>
            <person name="Brown A.J."/>
            <person name="Buck D."/>
            <person name="Burrill W.D."/>
            <person name="Butler A.P."/>
            <person name="Carder C."/>
            <person name="Carter N.P."/>
            <person name="Chapman J.C."/>
            <person name="Clamp M."/>
            <person name="Clark G."/>
            <person name="Clark L.N."/>
            <person name="Clark S.Y."/>
            <person name="Clee C.M."/>
            <person name="Clegg S."/>
            <person name="Cobley V.E."/>
            <person name="Collier R.E."/>
            <person name="Connor R.E."/>
            <person name="Corby N.R."/>
            <person name="Coulson A."/>
            <person name="Coville G.J."/>
            <person name="Deadman R."/>
            <person name="Dhami P.D."/>
            <person name="Dunn M."/>
            <person name="Ellington A.G."/>
            <person name="Frankland J.A."/>
            <person name="Fraser A."/>
            <person name="French L."/>
            <person name="Garner P."/>
            <person name="Grafham D.V."/>
            <person name="Griffiths C."/>
            <person name="Griffiths M.N.D."/>
            <person name="Gwilliam R."/>
            <person name="Hall R.E."/>
            <person name="Hammond S."/>
            <person name="Harley J.L."/>
            <person name="Heath P.D."/>
            <person name="Ho S."/>
            <person name="Holden J.L."/>
            <person name="Howden P.J."/>
            <person name="Huckle E."/>
            <person name="Hunt A.R."/>
            <person name="Hunt S.E."/>
            <person name="Jekosch K."/>
            <person name="Johnson C.M."/>
            <person name="Johnson D."/>
            <person name="Kay M.P."/>
            <person name="Kimberley A.M."/>
            <person name="King A."/>
            <person name="Knights A."/>
            <person name="Laird G.K."/>
            <person name="Lawlor S."/>
            <person name="Lehvaeslaiho M.H."/>
            <person name="Leversha M.A."/>
            <person name="Lloyd C."/>
            <person name="Lloyd D.M."/>
            <person name="Lovell J.D."/>
            <person name="Marsh V.L."/>
            <person name="Martin S.L."/>
            <person name="McConnachie L.J."/>
            <person name="McLay K."/>
            <person name="McMurray A.A."/>
            <person name="Milne S.A."/>
            <person name="Mistry D."/>
            <person name="Moore M.J.F."/>
            <person name="Mullikin J.C."/>
            <person name="Nickerson T."/>
            <person name="Oliver K."/>
            <person name="Parker A."/>
            <person name="Patel R."/>
            <person name="Pearce T.A.V."/>
            <person name="Peck A.I."/>
            <person name="Phillimore B.J.C.T."/>
            <person name="Prathalingam S.R."/>
            <person name="Plumb R.W."/>
            <person name="Ramsay H."/>
            <person name="Rice C.M."/>
            <person name="Ross M.T."/>
            <person name="Scott C.E."/>
            <person name="Sehra H.K."/>
            <person name="Shownkeen R."/>
            <person name="Sims S."/>
            <person name="Skuce C.D."/>
            <person name="Smith M.L."/>
            <person name="Soderlund C."/>
            <person name="Steward C.A."/>
            <person name="Sulston J.E."/>
            <person name="Swann R.M."/>
            <person name="Sycamore N."/>
            <person name="Taylor R."/>
            <person name="Tee L."/>
            <person name="Thomas D.W."/>
            <person name="Thorpe A."/>
            <person name="Tracey A."/>
            <person name="Tromans A.C."/>
            <person name="Vaudin M."/>
            <person name="Wall M."/>
            <person name="Wallis J.M."/>
            <person name="Whitehead S.L."/>
            <person name="Whittaker P."/>
            <person name="Willey D.L."/>
            <person name="Williams L."/>
            <person name="Williams S.A."/>
            <person name="Wilming L."/>
            <person name="Wray P.W."/>
            <person name="Hubbard T."/>
            <person name="Durbin R.M."/>
            <person name="Bentley D.R."/>
            <person name="Beck S."/>
            <person name="Rogers J."/>
        </authorList>
    </citation>
    <scope>NUCLEOTIDE SEQUENCE [LARGE SCALE GENOMIC DNA]</scope>
</reference>
<reference key="4">
    <citation type="submission" date="2005-09" db="EMBL/GenBank/DDBJ databases">
        <authorList>
            <person name="Mural R.J."/>
            <person name="Istrail S."/>
            <person name="Sutton G."/>
            <person name="Florea L."/>
            <person name="Halpern A.L."/>
            <person name="Mobarry C.M."/>
            <person name="Lippert R."/>
            <person name="Walenz B."/>
            <person name="Shatkay H."/>
            <person name="Dew I."/>
            <person name="Miller J.R."/>
            <person name="Flanigan M.J."/>
            <person name="Edwards N.J."/>
            <person name="Bolanos R."/>
            <person name="Fasulo D."/>
            <person name="Halldorsson B.V."/>
            <person name="Hannenhalli S."/>
            <person name="Turner R."/>
            <person name="Yooseph S."/>
            <person name="Lu F."/>
            <person name="Nusskern D.R."/>
            <person name="Shue B.C."/>
            <person name="Zheng X.H."/>
            <person name="Zhong F."/>
            <person name="Delcher A.L."/>
            <person name="Huson D.H."/>
            <person name="Kravitz S.A."/>
            <person name="Mouchard L."/>
            <person name="Reinert K."/>
            <person name="Remington K.A."/>
            <person name="Clark A.G."/>
            <person name="Waterman M.S."/>
            <person name="Eichler E.E."/>
            <person name="Adams M.D."/>
            <person name="Hunkapiller M.W."/>
            <person name="Myers E.W."/>
            <person name="Venter J.C."/>
        </authorList>
    </citation>
    <scope>NUCLEOTIDE SEQUENCE [LARGE SCALE GENOMIC DNA]</scope>
</reference>
<reference key="5">
    <citation type="journal article" date="2004" name="Genome Res.">
        <title>The status, quality, and expansion of the NIH full-length cDNA project: the Mammalian Gene Collection (MGC).</title>
        <authorList>
            <consortium name="The MGC Project Team"/>
        </authorList>
    </citation>
    <scope>NUCLEOTIDE SEQUENCE [LARGE SCALE MRNA] (ISOFORM 1)</scope>
    <source>
        <tissue>Brain cortex</tissue>
    </source>
</reference>
<reference key="6">
    <citation type="journal article" date="1991" name="Cell Regul.">
        <title>Diversity of the cadherin family: evidence for eight new cadherins in nervous tissue.</title>
        <authorList>
            <person name="Suzuki S."/>
            <person name="Sano K."/>
            <person name="Tanihara H."/>
        </authorList>
    </citation>
    <scope>NUCLEOTIDE SEQUENCE [MRNA] OF 393-916 (ISOFORM 1)</scope>
    <scope>VARIANT ARG-625</scope>
    <source>
        <tissue>Fetal brain</tissue>
    </source>
</reference>
<proteinExistence type="evidence at protein level"/>
<feature type="signal peptide" evidence="2">
    <location>
        <begin position="1"/>
        <end position="20"/>
    </location>
</feature>
<feature type="propeptide" id="PRO_0000003749" evidence="2">
    <location>
        <begin position="21"/>
        <end position="169"/>
    </location>
</feature>
<feature type="chain" id="PRO_0000003750" description="Cadherin-4">
    <location>
        <begin position="170"/>
        <end position="916"/>
    </location>
</feature>
<feature type="topological domain" description="Extracellular" evidence="2">
    <location>
        <begin position="170"/>
        <end position="734"/>
    </location>
</feature>
<feature type="transmembrane region" description="Helical" evidence="2">
    <location>
        <begin position="735"/>
        <end position="756"/>
    </location>
</feature>
<feature type="topological domain" description="Cytoplasmic" evidence="2">
    <location>
        <begin position="757"/>
        <end position="916"/>
    </location>
</feature>
<feature type="domain" description="Cadherin 1" evidence="3">
    <location>
        <begin position="170"/>
        <end position="277"/>
    </location>
</feature>
<feature type="domain" description="Cadherin 2" evidence="3">
    <location>
        <begin position="278"/>
        <end position="392"/>
    </location>
</feature>
<feature type="domain" description="Cadherin 3" evidence="3">
    <location>
        <begin position="393"/>
        <end position="507"/>
    </location>
</feature>
<feature type="domain" description="Cadherin 4" evidence="3">
    <location>
        <begin position="508"/>
        <end position="613"/>
    </location>
</feature>
<feature type="domain" description="Cadherin 5" evidence="3">
    <location>
        <begin position="614"/>
        <end position="724"/>
    </location>
</feature>
<feature type="region of interest" description="Disordered" evidence="4">
    <location>
        <begin position="124"/>
        <end position="168"/>
    </location>
</feature>
<feature type="region of interest" description="Disordered" evidence="4">
    <location>
        <begin position="806"/>
        <end position="838"/>
    </location>
</feature>
<feature type="compositionally biased region" description="Basic residues" evidence="4">
    <location>
        <begin position="129"/>
        <end position="138"/>
    </location>
</feature>
<feature type="glycosylation site" description="N-linked (GlcNAc...) asparagine" evidence="2">
    <location>
        <position position="283"/>
    </location>
</feature>
<feature type="glycosylation site" description="N-linked (GlcNAc...) asparagine" evidence="2">
    <location>
        <position position="412"/>
    </location>
</feature>
<feature type="glycosylation site" description="N-linked (GlcNAc...) asparagine" evidence="2">
    <location>
        <position position="557"/>
    </location>
</feature>
<feature type="glycosylation site" description="N-linked (GlcNAc...) asparagine" evidence="2">
    <location>
        <position position="632"/>
    </location>
</feature>
<feature type="glycosylation site" description="N-linked (GlcNAc...) asparagine" evidence="2">
    <location>
        <position position="661"/>
    </location>
</feature>
<feature type="glycosylation site" description="N-linked (GlcNAc...) asparagine" evidence="2">
    <location>
        <position position="702"/>
    </location>
</feature>
<feature type="splice variant" id="VSP_045548" description="In isoform 2." evidence="7">
    <location>
        <begin position="1"/>
        <end position="74"/>
    </location>
</feature>
<feature type="sequence variant" id="VAR_048504" description="In dbSNP:rs34937312.">
    <original>A</original>
    <variation>V</variation>
    <location>
        <position position="141"/>
    </location>
</feature>
<feature type="sequence variant" id="VAR_033699" description="In dbSNP:rs6142884." evidence="5 6">
    <original>K</original>
    <variation>R</variation>
    <location>
        <position position="625"/>
    </location>
</feature>
<feature type="sequence conflict" description="In Ref. 2; BAG54080." evidence="8" ref="2">
    <original>T</original>
    <variation>A</variation>
    <location>
        <position position="88"/>
    </location>
</feature>
<feature type="sequence conflict" description="In Ref. 1; AAA35627." evidence="8" ref="1">
    <original>D</original>
    <variation>N</variation>
    <location>
        <position position="223"/>
    </location>
</feature>
<feature type="sequence conflict" description="In Ref. 1; AAA35627." evidence="8" ref="1">
    <original>R</original>
    <variation>H</variation>
    <location>
        <position position="274"/>
    </location>
</feature>
<feature type="sequence conflict" description="In Ref. 1; AAA35627." evidence="8" ref="1">
    <original>G</original>
    <variation>C</variation>
    <location>
        <position position="284"/>
    </location>
</feature>
<feature type="sequence conflict" description="In Ref. 1; AAA35627." evidence="8" ref="1">
    <original>V</original>
    <variation>I</variation>
    <location>
        <position position="299"/>
    </location>
</feature>
<feature type="sequence conflict" description="In Ref. 1; AAA35627." evidence="8" ref="1">
    <original>L</original>
    <variation>W</variation>
    <location>
        <position position="347"/>
    </location>
</feature>
<feature type="sequence conflict" description="In Ref. 1; AAA35627." evidence="8" ref="1">
    <original>P</original>
    <variation>S</variation>
    <location>
        <position position="390"/>
    </location>
</feature>
<feature type="sequence conflict" description="In Ref. 1; AAA35627 and 6; no nucleotide entry." evidence="8" ref="1 6">
    <original>R</original>
    <variation>S</variation>
    <location>
        <position position="405"/>
    </location>
</feature>
<feature type="sequence conflict" description="In Ref. 2; BAG54080." evidence="8" ref="2">
    <original>N</original>
    <variation>S</variation>
    <location>
        <position position="502"/>
    </location>
</feature>
<feature type="sequence conflict" description="In Ref. 2; BAG54080." evidence="8" ref="2">
    <original>Q</original>
    <variation>R</variation>
    <location>
        <position position="540"/>
    </location>
</feature>
<feature type="sequence conflict" description="In Ref. 1; AAA35627 and 6; no nucleotide entry." evidence="8" ref="1 6">
    <original>A</original>
    <variation>V</variation>
    <location>
        <position position="566"/>
    </location>
</feature>
<feature type="sequence conflict" description="In Ref. 1; AAA35627 and 6; no nucleotide entry." evidence="8" ref="1 6">
    <original>D</original>
    <variation>H</variation>
    <location>
        <position position="641"/>
    </location>
</feature>
<feature type="sequence conflict" description="In Ref. 1; AAA35627 and 6; no nucleotide entry." evidence="8" ref="1 6">
    <original>DN</original>
    <variation>EK</variation>
    <location>
        <begin position="778"/>
        <end position="779"/>
    </location>
</feature>
<feature type="sequence conflict" description="In Ref. 1; AAA35627 and 6; no nucleotide entry." evidence="8" ref="1 6">
    <original>A</original>
    <variation>P</variation>
    <location>
        <position position="826"/>
    </location>
</feature>
<protein>
    <recommendedName>
        <fullName>Cadherin-4</fullName>
    </recommendedName>
    <alternativeName>
        <fullName>Retinal cadherin</fullName>
        <shortName>R-CAD</shortName>
        <shortName>R-cadherin</shortName>
    </alternativeName>
</protein>
<dbReference type="EMBL" id="L34059">
    <property type="protein sequence ID" value="AAA35627.1"/>
    <property type="molecule type" value="mRNA"/>
</dbReference>
<dbReference type="EMBL" id="AK124724">
    <property type="protein sequence ID" value="BAG54080.1"/>
    <property type="molecule type" value="mRNA"/>
</dbReference>
<dbReference type="EMBL" id="AL365401">
    <property type="status" value="NOT_ANNOTATED_CDS"/>
    <property type="molecule type" value="Genomic_DNA"/>
</dbReference>
<dbReference type="EMBL" id="AL162457">
    <property type="status" value="NOT_ANNOTATED_CDS"/>
    <property type="molecule type" value="Genomic_DNA"/>
</dbReference>
<dbReference type="EMBL" id="AL109911">
    <property type="status" value="NOT_ANNOTATED_CDS"/>
    <property type="molecule type" value="Genomic_DNA"/>
</dbReference>
<dbReference type="EMBL" id="AL365229">
    <property type="status" value="NOT_ANNOTATED_CDS"/>
    <property type="molecule type" value="Genomic_DNA"/>
</dbReference>
<dbReference type="EMBL" id="AL079336">
    <property type="status" value="NOT_ANNOTATED_CDS"/>
    <property type="molecule type" value="Genomic_DNA"/>
</dbReference>
<dbReference type="EMBL" id="AL160412">
    <property type="status" value="NOT_ANNOTATED_CDS"/>
    <property type="molecule type" value="Genomic_DNA"/>
</dbReference>
<dbReference type="EMBL" id="AL391316">
    <property type="status" value="NOT_ANNOTATED_CDS"/>
    <property type="molecule type" value="Genomic_DNA"/>
</dbReference>
<dbReference type="EMBL" id="AL450463">
    <property type="status" value="NOT_ANNOTATED_CDS"/>
    <property type="molecule type" value="Genomic_DNA"/>
</dbReference>
<dbReference type="EMBL" id="BX640515">
    <property type="status" value="NOT_ANNOTATED_CDS"/>
    <property type="molecule type" value="Genomic_DNA"/>
</dbReference>
<dbReference type="EMBL" id="CH471077">
    <property type="protein sequence ID" value="EAW75409.1"/>
    <property type="molecule type" value="Genomic_DNA"/>
</dbReference>
<dbReference type="EMBL" id="BC101651">
    <property type="protein sequence ID" value="AAI01652.1"/>
    <property type="molecule type" value="mRNA"/>
</dbReference>
<dbReference type="EMBL" id="BC112150">
    <property type="protein sequence ID" value="AAI12151.1"/>
    <property type="molecule type" value="mRNA"/>
</dbReference>
<dbReference type="CCDS" id="CCDS13488.1">
    <molecule id="P55283-1"/>
</dbReference>
<dbReference type="CCDS" id="CCDS58784.1">
    <molecule id="P55283-2"/>
</dbReference>
<dbReference type="PIR" id="C38992">
    <property type="entry name" value="C38992"/>
</dbReference>
<dbReference type="RefSeq" id="NP_001239268.1">
    <molecule id="P55283-2"/>
    <property type="nucleotide sequence ID" value="NM_001252339.3"/>
</dbReference>
<dbReference type="RefSeq" id="NP_001785.2">
    <molecule id="P55283-1"/>
    <property type="nucleotide sequence ID" value="NM_001794.4"/>
</dbReference>
<dbReference type="RefSeq" id="XP_047295768.1">
    <molecule id="P55283-2"/>
    <property type="nucleotide sequence ID" value="XM_047439812.1"/>
</dbReference>
<dbReference type="RefSeq" id="XP_047295769.1">
    <molecule id="P55283-2"/>
    <property type="nucleotide sequence ID" value="XM_047439813.1"/>
</dbReference>
<dbReference type="RefSeq" id="XP_054178787.1">
    <molecule id="P55283-2"/>
    <property type="nucleotide sequence ID" value="XM_054322812.1"/>
</dbReference>
<dbReference type="RefSeq" id="XP_054178788.1">
    <molecule id="P55283-2"/>
    <property type="nucleotide sequence ID" value="XM_054322813.1"/>
</dbReference>
<dbReference type="SMR" id="P55283"/>
<dbReference type="BioGRID" id="107437">
    <property type="interactions" value="12"/>
</dbReference>
<dbReference type="FunCoup" id="P55283">
    <property type="interactions" value="228"/>
</dbReference>
<dbReference type="IntAct" id="P55283">
    <property type="interactions" value="4"/>
</dbReference>
<dbReference type="MINT" id="P55283"/>
<dbReference type="STRING" id="9606.ENSP00000484928"/>
<dbReference type="GlyCosmos" id="P55283">
    <property type="glycosylation" value="6 sites, No reported glycans"/>
</dbReference>
<dbReference type="GlyGen" id="P55283">
    <property type="glycosylation" value="9 sites, 1 O-linked glycan (3 sites)"/>
</dbReference>
<dbReference type="iPTMnet" id="P55283"/>
<dbReference type="PhosphoSitePlus" id="P55283"/>
<dbReference type="BioMuta" id="CDH4"/>
<dbReference type="DMDM" id="81175161"/>
<dbReference type="jPOST" id="P55283"/>
<dbReference type="MassIVE" id="P55283"/>
<dbReference type="PaxDb" id="9606-ENSP00000484928"/>
<dbReference type="PeptideAtlas" id="P55283"/>
<dbReference type="ProteomicsDB" id="32401"/>
<dbReference type="ProteomicsDB" id="56833">
    <molecule id="P55283-1"/>
</dbReference>
<dbReference type="Antibodypedia" id="2666">
    <property type="antibodies" value="339 antibodies from 32 providers"/>
</dbReference>
<dbReference type="DNASU" id="1002"/>
<dbReference type="Ensembl" id="ENST00000543233.2">
    <molecule id="P55283-2"/>
    <property type="protein sequence ID" value="ENSP00000443301.1"/>
    <property type="gene ID" value="ENSG00000179242.16"/>
</dbReference>
<dbReference type="Ensembl" id="ENST00000614565.5">
    <molecule id="P55283-1"/>
    <property type="protein sequence ID" value="ENSP00000484928.1"/>
    <property type="gene ID" value="ENSG00000179242.16"/>
</dbReference>
<dbReference type="GeneID" id="1002"/>
<dbReference type="KEGG" id="hsa:1002"/>
<dbReference type="MANE-Select" id="ENST00000614565.5">
    <property type="protein sequence ID" value="ENSP00000484928.1"/>
    <property type="RefSeq nucleotide sequence ID" value="NM_001794.5"/>
    <property type="RefSeq protein sequence ID" value="NP_001785.2"/>
</dbReference>
<dbReference type="UCSC" id="uc032pok.1">
    <molecule id="P55283-1"/>
    <property type="organism name" value="human"/>
</dbReference>
<dbReference type="AGR" id="HGNC:1763"/>
<dbReference type="CTD" id="1002"/>
<dbReference type="DisGeNET" id="1002"/>
<dbReference type="GeneCards" id="CDH4"/>
<dbReference type="HGNC" id="HGNC:1763">
    <property type="gene designation" value="CDH4"/>
</dbReference>
<dbReference type="HPA" id="ENSG00000179242">
    <property type="expression patterns" value="Group enriched (brain, lymphoid tissue, ovary, skeletal muscle)"/>
</dbReference>
<dbReference type="MalaCards" id="CDH4"/>
<dbReference type="MIM" id="603006">
    <property type="type" value="gene"/>
</dbReference>
<dbReference type="neXtProt" id="NX_P55283"/>
<dbReference type="OpenTargets" id="ENSG00000179242"/>
<dbReference type="PharmGKB" id="PA26300"/>
<dbReference type="VEuPathDB" id="HostDB:ENSG00000179242"/>
<dbReference type="eggNOG" id="KOG3594">
    <property type="taxonomic scope" value="Eukaryota"/>
</dbReference>
<dbReference type="GeneTree" id="ENSGT00940000158073"/>
<dbReference type="InParanoid" id="P55283"/>
<dbReference type="OMA" id="QICERPG"/>
<dbReference type="OrthoDB" id="6079678at2759"/>
<dbReference type="PAN-GO" id="P55283">
    <property type="GO annotations" value="4 GO annotations based on evolutionary models"/>
</dbReference>
<dbReference type="PhylomeDB" id="P55283"/>
<dbReference type="TreeFam" id="TF316817"/>
<dbReference type="PathwayCommons" id="P55283"/>
<dbReference type="Reactome" id="R-HSA-418990">
    <property type="pathway name" value="Adherens junctions interactions"/>
</dbReference>
<dbReference type="Reactome" id="R-HSA-525793">
    <property type="pathway name" value="Myogenesis"/>
</dbReference>
<dbReference type="SignaLink" id="P55283"/>
<dbReference type="SIGNOR" id="P55283"/>
<dbReference type="BioGRID-ORCS" id="1002">
    <property type="hits" value="11 hits in 1149 CRISPR screens"/>
</dbReference>
<dbReference type="CD-CODE" id="FB4E32DD">
    <property type="entry name" value="Presynaptic clusters and postsynaptic densities"/>
</dbReference>
<dbReference type="ChiTaRS" id="CDH4">
    <property type="organism name" value="human"/>
</dbReference>
<dbReference type="GeneWiki" id="CDH4"/>
<dbReference type="GenomeRNAi" id="1002"/>
<dbReference type="Pharos" id="P55283">
    <property type="development level" value="Tbio"/>
</dbReference>
<dbReference type="PRO" id="PR:P55283"/>
<dbReference type="Proteomes" id="UP000005640">
    <property type="component" value="Chromosome 20"/>
</dbReference>
<dbReference type="RNAct" id="P55283">
    <property type="molecule type" value="protein"/>
</dbReference>
<dbReference type="Bgee" id="ENSG00000179242">
    <property type="expression patterns" value="Expressed in ventricular zone and 90 other cell types or tissues"/>
</dbReference>
<dbReference type="ExpressionAtlas" id="P55283">
    <property type="expression patterns" value="baseline and differential"/>
</dbReference>
<dbReference type="GO" id="GO:0005912">
    <property type="term" value="C:adherens junction"/>
    <property type="evidence" value="ECO:0000318"/>
    <property type="project" value="GO_Central"/>
</dbReference>
<dbReference type="GO" id="GO:0016342">
    <property type="term" value="C:catenin complex"/>
    <property type="evidence" value="ECO:0000318"/>
    <property type="project" value="GO_Central"/>
</dbReference>
<dbReference type="GO" id="GO:0005886">
    <property type="term" value="C:plasma membrane"/>
    <property type="evidence" value="ECO:0000314"/>
    <property type="project" value="HPA"/>
</dbReference>
<dbReference type="GO" id="GO:0008013">
    <property type="term" value="F:beta-catenin binding"/>
    <property type="evidence" value="ECO:0000318"/>
    <property type="project" value="GO_Central"/>
</dbReference>
<dbReference type="GO" id="GO:0045296">
    <property type="term" value="F:cadherin binding"/>
    <property type="evidence" value="ECO:0000318"/>
    <property type="project" value="GO_Central"/>
</dbReference>
<dbReference type="GO" id="GO:0005509">
    <property type="term" value="F:calcium ion binding"/>
    <property type="evidence" value="ECO:0007669"/>
    <property type="project" value="InterPro"/>
</dbReference>
<dbReference type="GO" id="GO:0034332">
    <property type="term" value="P:adherens junction organization"/>
    <property type="evidence" value="ECO:0000318"/>
    <property type="project" value="GO_Central"/>
</dbReference>
<dbReference type="GO" id="GO:0048675">
    <property type="term" value="P:axon extension"/>
    <property type="evidence" value="ECO:0007669"/>
    <property type="project" value="Ensembl"/>
</dbReference>
<dbReference type="GO" id="GO:0007411">
    <property type="term" value="P:axon guidance"/>
    <property type="evidence" value="ECO:0007669"/>
    <property type="project" value="Ensembl"/>
</dbReference>
<dbReference type="GO" id="GO:0016339">
    <property type="term" value="P:calcium-dependent cell-cell adhesion via plasma membrane cell adhesion molecules"/>
    <property type="evidence" value="ECO:0000318"/>
    <property type="project" value="GO_Central"/>
</dbReference>
<dbReference type="GO" id="GO:0007155">
    <property type="term" value="P:cell adhesion"/>
    <property type="evidence" value="ECO:0000304"/>
    <property type="project" value="ProtInc"/>
</dbReference>
<dbReference type="GO" id="GO:0016477">
    <property type="term" value="P:cell migration"/>
    <property type="evidence" value="ECO:0000318"/>
    <property type="project" value="GO_Central"/>
</dbReference>
<dbReference type="GO" id="GO:0000902">
    <property type="term" value="P:cell morphogenesis"/>
    <property type="evidence" value="ECO:0000318"/>
    <property type="project" value="GO_Central"/>
</dbReference>
<dbReference type="GO" id="GO:0044331">
    <property type="term" value="P:cell-cell adhesion mediated by cadherin"/>
    <property type="evidence" value="ECO:0000318"/>
    <property type="project" value="GO_Central"/>
</dbReference>
<dbReference type="GO" id="GO:0007043">
    <property type="term" value="P:cell-cell junction assembly"/>
    <property type="evidence" value="ECO:0000318"/>
    <property type="project" value="GO_Central"/>
</dbReference>
<dbReference type="GO" id="GO:0007157">
    <property type="term" value="P:heterophilic cell-cell adhesion via plasma membrane cell adhesion molecules"/>
    <property type="evidence" value="ECO:0007669"/>
    <property type="project" value="Ensembl"/>
</dbReference>
<dbReference type="GO" id="GO:0007156">
    <property type="term" value="P:homophilic cell adhesion via plasma membrane adhesion molecules"/>
    <property type="evidence" value="ECO:0007669"/>
    <property type="project" value="Ensembl"/>
</dbReference>
<dbReference type="GO" id="GO:0045773">
    <property type="term" value="P:positive regulation of axon extension"/>
    <property type="evidence" value="ECO:0007669"/>
    <property type="project" value="Ensembl"/>
</dbReference>
<dbReference type="CDD" id="cd11304">
    <property type="entry name" value="Cadherin_repeat"/>
    <property type="match status" value="3"/>
</dbReference>
<dbReference type="FunFam" id="2.60.40.60:FF:000011">
    <property type="entry name" value="Cadherin 1"/>
    <property type="match status" value="1"/>
</dbReference>
<dbReference type="FunFam" id="2.60.40.60:FF:000022">
    <property type="entry name" value="Cadherin 2"/>
    <property type="match status" value="1"/>
</dbReference>
<dbReference type="FunFam" id="2.60.40.60:FF:000027">
    <property type="entry name" value="Cadherin 2"/>
    <property type="match status" value="1"/>
</dbReference>
<dbReference type="FunFam" id="2.60.40.60:FF:000045">
    <property type="entry name" value="Cadherin 2"/>
    <property type="match status" value="1"/>
</dbReference>
<dbReference type="FunFam" id="4.10.900.10:FF:000001">
    <property type="entry name" value="Cadherin 2"/>
    <property type="match status" value="1"/>
</dbReference>
<dbReference type="FunFam" id="2.60.40.60:FF:000615">
    <property type="entry name" value="Cadherin-2"/>
    <property type="match status" value="1"/>
</dbReference>
<dbReference type="FunFam" id="2.60.40.60:FF:000287">
    <property type="entry name" value="Cadherin-4"/>
    <property type="match status" value="1"/>
</dbReference>
<dbReference type="Gene3D" id="2.60.40.60">
    <property type="entry name" value="Cadherins"/>
    <property type="match status" value="6"/>
</dbReference>
<dbReference type="Gene3D" id="4.10.900.10">
    <property type="entry name" value="TCF3-CBD (Catenin binding domain)"/>
    <property type="match status" value="1"/>
</dbReference>
<dbReference type="InterPro" id="IPR039808">
    <property type="entry name" value="Cadherin"/>
</dbReference>
<dbReference type="InterPro" id="IPR002126">
    <property type="entry name" value="Cadherin-like_dom"/>
</dbReference>
<dbReference type="InterPro" id="IPR015919">
    <property type="entry name" value="Cadherin-like_sf"/>
</dbReference>
<dbReference type="InterPro" id="IPR020894">
    <property type="entry name" value="Cadherin_CS"/>
</dbReference>
<dbReference type="InterPro" id="IPR014868">
    <property type="entry name" value="Cadherin_pro_dom"/>
</dbReference>
<dbReference type="InterPro" id="IPR000233">
    <property type="entry name" value="Cadherin_Y-type_LIR"/>
</dbReference>
<dbReference type="InterPro" id="IPR027397">
    <property type="entry name" value="Catenin-bd_sf"/>
</dbReference>
<dbReference type="PANTHER" id="PTHR24027">
    <property type="entry name" value="CADHERIN-23"/>
    <property type="match status" value="1"/>
</dbReference>
<dbReference type="PANTHER" id="PTHR24027:SF81">
    <property type="entry name" value="CADHERIN-4"/>
    <property type="match status" value="1"/>
</dbReference>
<dbReference type="Pfam" id="PF01049">
    <property type="entry name" value="CADH_Y-type_LIR"/>
    <property type="match status" value="1"/>
</dbReference>
<dbReference type="Pfam" id="PF00028">
    <property type="entry name" value="Cadherin"/>
    <property type="match status" value="4"/>
</dbReference>
<dbReference type="Pfam" id="PF08758">
    <property type="entry name" value="Cadherin_pro"/>
    <property type="match status" value="1"/>
</dbReference>
<dbReference type="PRINTS" id="PR00205">
    <property type="entry name" value="CADHERIN"/>
</dbReference>
<dbReference type="PRINTS" id="PR01820">
    <property type="entry name" value="DESMOCOLLIN"/>
</dbReference>
<dbReference type="SMART" id="SM00112">
    <property type="entry name" value="CA"/>
    <property type="match status" value="5"/>
</dbReference>
<dbReference type="SMART" id="SM01055">
    <property type="entry name" value="Cadherin_pro"/>
    <property type="match status" value="1"/>
</dbReference>
<dbReference type="SUPFAM" id="SSF49313">
    <property type="entry name" value="Cadherin-like"/>
    <property type="match status" value="6"/>
</dbReference>
<dbReference type="PROSITE" id="PS00232">
    <property type="entry name" value="CADHERIN_1"/>
    <property type="match status" value="3"/>
</dbReference>
<dbReference type="PROSITE" id="PS50268">
    <property type="entry name" value="CADHERIN_2"/>
    <property type="match status" value="5"/>
</dbReference>
<comment type="function">
    <text>Cadherins are calcium-dependent cell adhesion proteins. They preferentially interact with themselves in a homophilic manner in connecting cells; cadherins may thus contribute to the sorting of heterogeneous cell types. May play an important role in retinal development.</text>
</comment>
<comment type="subcellular location">
    <subcellularLocation>
        <location>Cell membrane</location>
        <topology>Single-pass type I membrane protein</topology>
    </subcellularLocation>
</comment>
<comment type="alternative products">
    <event type="alternative splicing"/>
    <isoform>
        <id>P55283-1</id>
        <name>1</name>
        <sequence type="displayed"/>
    </isoform>
    <isoform>
        <id>P55283-2</id>
        <name>2</name>
        <sequence type="described" ref="VSP_045548"/>
    </isoform>
</comment>
<comment type="tissue specificity">
    <text>Expressed mainly in brain but also found in other tissues.</text>
</comment>
<comment type="domain">
    <text evidence="1">Three calcium ions are usually bound at the interface of each cadherin domain and rigidify the connections, imparting a strong curvature to the full-length ectodomain.</text>
</comment>